<dbReference type="EC" id="3.1.-.-"/>
<dbReference type="EMBL" id="AP006716">
    <property type="protein sequence ID" value="BAE04272.1"/>
    <property type="molecule type" value="Genomic_DNA"/>
</dbReference>
<dbReference type="RefSeq" id="WP_011275272.1">
    <property type="nucleotide sequence ID" value="NC_007168.1"/>
</dbReference>
<dbReference type="SMR" id="Q4L7V3"/>
<dbReference type="KEGG" id="sha:SH0963"/>
<dbReference type="eggNOG" id="COG2337">
    <property type="taxonomic scope" value="Bacteria"/>
</dbReference>
<dbReference type="HOGENOM" id="CLU_121823_1_0_9"/>
<dbReference type="OrthoDB" id="9808744at2"/>
<dbReference type="Proteomes" id="UP000000543">
    <property type="component" value="Chromosome"/>
</dbReference>
<dbReference type="GO" id="GO:0003677">
    <property type="term" value="F:DNA binding"/>
    <property type="evidence" value="ECO:0007669"/>
    <property type="project" value="InterPro"/>
</dbReference>
<dbReference type="GO" id="GO:0003723">
    <property type="term" value="F:RNA binding"/>
    <property type="evidence" value="ECO:0007669"/>
    <property type="project" value="UniProtKB-KW"/>
</dbReference>
<dbReference type="GO" id="GO:0004521">
    <property type="term" value="F:RNA endonuclease activity"/>
    <property type="evidence" value="ECO:0007669"/>
    <property type="project" value="TreeGrafter"/>
</dbReference>
<dbReference type="GO" id="GO:0006402">
    <property type="term" value="P:mRNA catabolic process"/>
    <property type="evidence" value="ECO:0007669"/>
    <property type="project" value="TreeGrafter"/>
</dbReference>
<dbReference type="GO" id="GO:0016075">
    <property type="term" value="P:rRNA catabolic process"/>
    <property type="evidence" value="ECO:0007669"/>
    <property type="project" value="TreeGrafter"/>
</dbReference>
<dbReference type="Gene3D" id="2.30.30.110">
    <property type="match status" value="1"/>
</dbReference>
<dbReference type="InterPro" id="IPR003477">
    <property type="entry name" value="PemK-like"/>
</dbReference>
<dbReference type="InterPro" id="IPR011067">
    <property type="entry name" value="Plasmid_toxin/cell-grow_inhib"/>
</dbReference>
<dbReference type="PANTHER" id="PTHR33988:SF2">
    <property type="entry name" value="ENDORIBONUCLEASE MAZF"/>
    <property type="match status" value="1"/>
</dbReference>
<dbReference type="PANTHER" id="PTHR33988">
    <property type="entry name" value="ENDORIBONUCLEASE MAZF-RELATED"/>
    <property type="match status" value="1"/>
</dbReference>
<dbReference type="Pfam" id="PF02452">
    <property type="entry name" value="PemK_toxin"/>
    <property type="match status" value="1"/>
</dbReference>
<dbReference type="PIRSF" id="PIRSF033490">
    <property type="entry name" value="MazF"/>
    <property type="match status" value="1"/>
</dbReference>
<dbReference type="SUPFAM" id="SSF50118">
    <property type="entry name" value="Cell growth inhibitor/plasmid maintenance toxic component"/>
    <property type="match status" value="1"/>
</dbReference>
<accession>Q4L7V3</accession>
<evidence type="ECO:0000250" key="1">
    <source>
        <dbReference type="UniProtKB" id="A6QIR4"/>
    </source>
</evidence>
<evidence type="ECO:0000305" key="2"/>
<reference key="1">
    <citation type="journal article" date="2005" name="J. Bacteriol.">
        <title>Whole-genome sequencing of Staphylococcus haemolyticus uncovers the extreme plasticity of its genome and the evolution of human-colonizing staphylococcal species.</title>
        <authorList>
            <person name="Takeuchi F."/>
            <person name="Watanabe S."/>
            <person name="Baba T."/>
            <person name="Yuzawa H."/>
            <person name="Ito T."/>
            <person name="Morimoto Y."/>
            <person name="Kuroda M."/>
            <person name="Cui L."/>
            <person name="Takahashi M."/>
            <person name="Ankai A."/>
            <person name="Baba S."/>
            <person name="Fukui S."/>
            <person name="Lee J.C."/>
            <person name="Hiramatsu K."/>
        </authorList>
    </citation>
    <scope>NUCLEOTIDE SEQUENCE [LARGE SCALE GENOMIC DNA]</scope>
    <source>
        <strain>JCSC1435</strain>
    </source>
</reference>
<proteinExistence type="inferred from homology"/>
<sequence>MIRRGDVYLADLSPVQGSEQGGVRPVVIIQNDTGNKYSPTVIVAAITGRINKAKIPTHVEIEKKKYRLDKDSVILLEQIRTLDKKRLKEKLTYLSDEKMQEVDEALDISLGLHDEVKTQNT</sequence>
<protein>
    <recommendedName>
        <fullName>Endoribonuclease MazF</fullName>
        <ecNumber>3.1.-.-</ecNumber>
    </recommendedName>
    <alternativeName>
        <fullName>Toxin MazF</fullName>
    </alternativeName>
    <alternativeName>
        <fullName>mRNA interferase MazF</fullName>
    </alternativeName>
</protein>
<name>MAZF_STAHJ</name>
<organism>
    <name type="scientific">Staphylococcus haemolyticus (strain JCSC1435)</name>
    <dbReference type="NCBI Taxonomy" id="279808"/>
    <lineage>
        <taxon>Bacteria</taxon>
        <taxon>Bacillati</taxon>
        <taxon>Bacillota</taxon>
        <taxon>Bacilli</taxon>
        <taxon>Bacillales</taxon>
        <taxon>Staphylococcaceae</taxon>
        <taxon>Staphylococcus</taxon>
    </lineage>
</organism>
<keyword id="KW-0255">Endonuclease</keyword>
<keyword id="KW-0378">Hydrolase</keyword>
<keyword id="KW-0540">Nuclease</keyword>
<keyword id="KW-0694">RNA-binding</keyword>
<keyword id="KW-1277">Toxin-antitoxin system</keyword>
<gene>
    <name type="primary">mazF</name>
    <name type="ordered locus">SH0963</name>
</gene>
<comment type="function">
    <text evidence="1">Toxic component of a type II toxin-antitoxin (TA) system. Ribosome-independent, sequence-specific endoribonuclease that cleaves mRNA, thus inhibiting protein synthesis and inducing bacterial stasis. It cuts between the first and nucleotides of 5'-UACAU-3' in single-stranded RNA. Neutralized by coexpression with cognate antitoxin MazE.</text>
</comment>
<comment type="subunit">
    <text evidence="1">Forms a complex with MazE which is no longer active as an endoribonuclease.</text>
</comment>
<comment type="similarity">
    <text evidence="2">Belongs to the PemK/MazF family.</text>
</comment>
<feature type="chain" id="PRO_0000330708" description="Endoribonuclease MazF">
    <location>
        <begin position="1"/>
        <end position="121"/>
    </location>
</feature>